<comment type="function">
    <text evidence="1">Catalyzes the phosphorylation of pantothenate (Pan), the first step in CoA biosynthesis.</text>
</comment>
<comment type="catalytic activity">
    <reaction evidence="1">
        <text>(R)-pantothenate + ATP = (R)-4'-phosphopantothenate + ADP + H(+)</text>
        <dbReference type="Rhea" id="RHEA:16373"/>
        <dbReference type="ChEBI" id="CHEBI:10986"/>
        <dbReference type="ChEBI" id="CHEBI:15378"/>
        <dbReference type="ChEBI" id="CHEBI:29032"/>
        <dbReference type="ChEBI" id="CHEBI:30616"/>
        <dbReference type="ChEBI" id="CHEBI:456216"/>
        <dbReference type="EC" id="2.7.1.33"/>
    </reaction>
</comment>
<comment type="cofactor">
    <cofactor evidence="1">
        <name>NH4(+)</name>
        <dbReference type="ChEBI" id="CHEBI:28938"/>
    </cofactor>
    <cofactor evidence="1">
        <name>K(+)</name>
        <dbReference type="ChEBI" id="CHEBI:29103"/>
    </cofactor>
    <text evidence="1">A monovalent cation. Ammonium or potassium.</text>
</comment>
<comment type="pathway">
    <text evidence="1">Cofactor biosynthesis; coenzyme A biosynthesis; CoA from (R)-pantothenate: step 1/5.</text>
</comment>
<comment type="subunit">
    <text evidence="1">Homodimer.</text>
</comment>
<comment type="subcellular location">
    <subcellularLocation>
        <location evidence="1">Cytoplasm</location>
    </subcellularLocation>
</comment>
<comment type="similarity">
    <text evidence="1">Belongs to the type III pantothenate kinase family.</text>
</comment>
<keyword id="KW-0067">ATP-binding</keyword>
<keyword id="KW-0173">Coenzyme A biosynthesis</keyword>
<keyword id="KW-0963">Cytoplasm</keyword>
<keyword id="KW-0418">Kinase</keyword>
<keyword id="KW-0479">Metal-binding</keyword>
<keyword id="KW-0547">Nucleotide-binding</keyword>
<keyword id="KW-0630">Potassium</keyword>
<keyword id="KW-0808">Transferase</keyword>
<gene>
    <name evidence="1" type="primary">coaX</name>
    <name type="ordered locus">CPF_2784</name>
</gene>
<protein>
    <recommendedName>
        <fullName evidence="1">Type III pantothenate kinase</fullName>
        <ecNumber evidence="1">2.7.1.33</ecNumber>
    </recommendedName>
    <alternativeName>
        <fullName evidence="1">PanK-III</fullName>
    </alternativeName>
    <alternativeName>
        <fullName evidence="1">Pantothenic acid kinase</fullName>
    </alternativeName>
</protein>
<feature type="chain" id="PRO_0000267513" description="Type III pantothenate kinase">
    <location>
        <begin position="1"/>
        <end position="259"/>
    </location>
</feature>
<feature type="active site" description="Proton acceptor" evidence="1">
    <location>
        <position position="109"/>
    </location>
</feature>
<feature type="binding site" evidence="1">
    <location>
        <begin position="6"/>
        <end position="13"/>
    </location>
    <ligand>
        <name>ATP</name>
        <dbReference type="ChEBI" id="CHEBI:30616"/>
    </ligand>
</feature>
<feature type="binding site" evidence="1">
    <location>
        <position position="100"/>
    </location>
    <ligand>
        <name>substrate</name>
    </ligand>
</feature>
<feature type="binding site" evidence="1">
    <location>
        <begin position="107"/>
        <end position="110"/>
    </location>
    <ligand>
        <name>substrate</name>
    </ligand>
</feature>
<feature type="binding site" evidence="1">
    <location>
        <position position="129"/>
    </location>
    <ligand>
        <name>K(+)</name>
        <dbReference type="ChEBI" id="CHEBI:29103"/>
    </ligand>
</feature>
<feature type="binding site" evidence="1">
    <location>
        <position position="132"/>
    </location>
    <ligand>
        <name>ATP</name>
        <dbReference type="ChEBI" id="CHEBI:30616"/>
    </ligand>
</feature>
<feature type="binding site" evidence="1">
    <location>
        <position position="184"/>
    </location>
    <ligand>
        <name>substrate</name>
    </ligand>
</feature>
<dbReference type="EC" id="2.7.1.33" evidence="1"/>
<dbReference type="EMBL" id="CP000246">
    <property type="protein sequence ID" value="ABG83574.1"/>
    <property type="molecule type" value="Genomic_DNA"/>
</dbReference>
<dbReference type="RefSeq" id="WP_003450343.1">
    <property type="nucleotide sequence ID" value="NC_008261.1"/>
</dbReference>
<dbReference type="SMR" id="Q0TMI4"/>
<dbReference type="STRING" id="195103.CPF_2784"/>
<dbReference type="PaxDb" id="195103-CPF_2784"/>
<dbReference type="KEGG" id="cpf:CPF_2784"/>
<dbReference type="eggNOG" id="COG1521">
    <property type="taxonomic scope" value="Bacteria"/>
</dbReference>
<dbReference type="HOGENOM" id="CLU_066627_1_0_9"/>
<dbReference type="UniPathway" id="UPA00241">
    <property type="reaction ID" value="UER00352"/>
</dbReference>
<dbReference type="Proteomes" id="UP000001823">
    <property type="component" value="Chromosome"/>
</dbReference>
<dbReference type="GO" id="GO:0005737">
    <property type="term" value="C:cytoplasm"/>
    <property type="evidence" value="ECO:0007669"/>
    <property type="project" value="UniProtKB-SubCell"/>
</dbReference>
<dbReference type="GO" id="GO:0005524">
    <property type="term" value="F:ATP binding"/>
    <property type="evidence" value="ECO:0007669"/>
    <property type="project" value="UniProtKB-UniRule"/>
</dbReference>
<dbReference type="GO" id="GO:0046872">
    <property type="term" value="F:metal ion binding"/>
    <property type="evidence" value="ECO:0007669"/>
    <property type="project" value="UniProtKB-KW"/>
</dbReference>
<dbReference type="GO" id="GO:0004594">
    <property type="term" value="F:pantothenate kinase activity"/>
    <property type="evidence" value="ECO:0007669"/>
    <property type="project" value="UniProtKB-UniRule"/>
</dbReference>
<dbReference type="GO" id="GO:0015937">
    <property type="term" value="P:coenzyme A biosynthetic process"/>
    <property type="evidence" value="ECO:0007669"/>
    <property type="project" value="UniProtKB-UniRule"/>
</dbReference>
<dbReference type="CDD" id="cd24015">
    <property type="entry name" value="ASKHA_NBD_PanK-III"/>
    <property type="match status" value="1"/>
</dbReference>
<dbReference type="Gene3D" id="3.30.420.40">
    <property type="match status" value="2"/>
</dbReference>
<dbReference type="HAMAP" id="MF_01274">
    <property type="entry name" value="Pantothen_kinase_3"/>
    <property type="match status" value="1"/>
</dbReference>
<dbReference type="InterPro" id="IPR043129">
    <property type="entry name" value="ATPase_NBD"/>
</dbReference>
<dbReference type="InterPro" id="IPR004619">
    <property type="entry name" value="Type_III_PanK"/>
</dbReference>
<dbReference type="NCBIfam" id="TIGR00671">
    <property type="entry name" value="baf"/>
    <property type="match status" value="1"/>
</dbReference>
<dbReference type="NCBIfam" id="NF009847">
    <property type="entry name" value="PRK13318.1-5"/>
    <property type="match status" value="1"/>
</dbReference>
<dbReference type="NCBIfam" id="NF009848">
    <property type="entry name" value="PRK13318.1-6"/>
    <property type="match status" value="1"/>
</dbReference>
<dbReference type="NCBIfam" id="NF009855">
    <property type="entry name" value="PRK13321.1"/>
    <property type="match status" value="1"/>
</dbReference>
<dbReference type="PANTHER" id="PTHR34265">
    <property type="entry name" value="TYPE III PANTOTHENATE KINASE"/>
    <property type="match status" value="1"/>
</dbReference>
<dbReference type="PANTHER" id="PTHR34265:SF1">
    <property type="entry name" value="TYPE III PANTOTHENATE KINASE"/>
    <property type="match status" value="1"/>
</dbReference>
<dbReference type="Pfam" id="PF03309">
    <property type="entry name" value="Pan_kinase"/>
    <property type="match status" value="1"/>
</dbReference>
<dbReference type="SUPFAM" id="SSF53067">
    <property type="entry name" value="Actin-like ATPase domain"/>
    <property type="match status" value="2"/>
</dbReference>
<accession>Q0TMI4</accession>
<organism>
    <name type="scientific">Clostridium perfringens (strain ATCC 13124 / DSM 756 / JCM 1290 / NCIMB 6125 / NCTC 8237 / Type A)</name>
    <dbReference type="NCBI Taxonomy" id="195103"/>
    <lineage>
        <taxon>Bacteria</taxon>
        <taxon>Bacillati</taxon>
        <taxon>Bacillota</taxon>
        <taxon>Clostridia</taxon>
        <taxon>Eubacteriales</taxon>
        <taxon>Clostridiaceae</taxon>
        <taxon>Clostridium</taxon>
    </lineage>
</organism>
<proteinExistence type="inferred from homology"/>
<evidence type="ECO:0000255" key="1">
    <source>
        <dbReference type="HAMAP-Rule" id="MF_01274"/>
    </source>
</evidence>
<sequence length="259" mass="28834">MILLIDVGNTNIVLGIHDNEKYIASWRISTDSKKTSDEYSIQVMQLFNQAKLNPEEVEGIIISSVVPNIMHSLENMVRKCFCKEPIVVGPGIKTGINIKYDNPKEVGADRIVNAVAAFEKHKKPMIIIDFGTATTFCAITEKGDYLGGNICPGIQISADALFERAAKLPRIELEKPKSVICKNTVTSMQAGIIYGYIGKVEYIVKRMKKEMMDLGEKEPFVLATGGLAKLVYSETDVIDEVDRKLTLEGLKILYEKNKE</sequence>
<reference key="1">
    <citation type="journal article" date="2006" name="Genome Res.">
        <title>Skewed genomic variability in strains of the toxigenic bacterial pathogen, Clostridium perfringens.</title>
        <authorList>
            <person name="Myers G.S.A."/>
            <person name="Rasko D.A."/>
            <person name="Cheung J.K."/>
            <person name="Ravel J."/>
            <person name="Seshadri R."/>
            <person name="DeBoy R.T."/>
            <person name="Ren Q."/>
            <person name="Varga J."/>
            <person name="Awad M.M."/>
            <person name="Brinkac L.M."/>
            <person name="Daugherty S.C."/>
            <person name="Haft D.H."/>
            <person name="Dodson R.J."/>
            <person name="Madupu R."/>
            <person name="Nelson W.C."/>
            <person name="Rosovitz M.J."/>
            <person name="Sullivan S.A."/>
            <person name="Khouri H."/>
            <person name="Dimitrov G.I."/>
            <person name="Watkins K.L."/>
            <person name="Mulligan S."/>
            <person name="Benton J."/>
            <person name="Radune D."/>
            <person name="Fisher D.J."/>
            <person name="Atkins H.S."/>
            <person name="Hiscox T."/>
            <person name="Jost B.H."/>
            <person name="Billington S.J."/>
            <person name="Songer J.G."/>
            <person name="McClane B.A."/>
            <person name="Titball R.W."/>
            <person name="Rood J.I."/>
            <person name="Melville S.B."/>
            <person name="Paulsen I.T."/>
        </authorList>
    </citation>
    <scope>NUCLEOTIDE SEQUENCE [LARGE SCALE GENOMIC DNA]</scope>
    <source>
        <strain>ATCC 13124 / DSM 756 / JCM 1290 / NCIMB 6125 / NCTC 8237 / S 107 / Type A</strain>
    </source>
</reference>
<name>COAX_CLOP1</name>